<feature type="chain" id="PRO_0000415595" description="Hemoglobin subunit beta">
    <location>
        <begin position="1"/>
        <end position="146"/>
    </location>
</feature>
<feature type="domain" description="Globin" evidence="4">
    <location>
        <begin position="2"/>
        <end position="146"/>
    </location>
</feature>
<feature type="binding site" description="distal binding residue" evidence="1 4">
    <location>
        <position position="63"/>
    </location>
    <ligand>
        <name>heme b</name>
        <dbReference type="ChEBI" id="CHEBI:60344"/>
    </ligand>
    <ligandPart>
        <name>Fe</name>
        <dbReference type="ChEBI" id="CHEBI:18248"/>
    </ligandPart>
</feature>
<feature type="binding site" description="proximal binding residue" evidence="1 4">
    <location>
        <position position="92"/>
    </location>
    <ligand>
        <name>heme b</name>
        <dbReference type="ChEBI" id="CHEBI:60344"/>
    </ligand>
    <ligandPart>
        <name>Fe</name>
        <dbReference type="ChEBI" id="CHEBI:18248"/>
    </ligandPart>
</feature>
<feature type="modified residue" description="N-acetylvaline" evidence="2">
    <location>
        <position position="1"/>
    </location>
</feature>
<feature type="modified residue" description="Phosphothreonine" evidence="3">
    <location>
        <position position="12"/>
    </location>
</feature>
<feature type="modified residue" description="Phosphoserine" evidence="3">
    <location>
        <position position="44"/>
    </location>
</feature>
<feature type="modified residue" description="N6-acetyllysine" evidence="3">
    <location>
        <position position="59"/>
    </location>
</feature>
<feature type="modified residue" description="N6-acetyllysine" evidence="3">
    <location>
        <position position="82"/>
    </location>
</feature>
<feature type="modified residue" description="S-nitrosocysteine" evidence="3">
    <location>
        <position position="93"/>
    </location>
</feature>
<feature type="modified residue" description="N6-acetyllysine" evidence="3">
    <location>
        <position position="144"/>
    </location>
</feature>
<feature type="unsure residue" description="L or I" evidence="5">
    <location>
        <position position="3"/>
    </location>
</feature>
<feature type="unsure residue" description="L or I" evidence="5">
    <location>
        <position position="10"/>
    </location>
</feature>
<feature type="unsure residue" description="L or I" evidence="5">
    <location>
        <position position="14"/>
    </location>
</feature>
<feature type="unsure residue" description="L or I" evidence="5">
    <location>
        <position position="23"/>
    </location>
</feature>
<feature type="unsure residue" description="L or I" evidence="5">
    <location>
        <position position="28"/>
    </location>
</feature>
<feature type="unsure residue" description="L or I" evidence="5">
    <location>
        <position position="31"/>
    </location>
</feature>
<feature type="unsure residue" description="L or I" evidence="5">
    <location>
        <position position="32"/>
    </location>
</feature>
<feature type="unsure residue" description="L or I" evidence="5">
    <location>
        <position position="48"/>
    </location>
</feature>
<feature type="unsure residue" description="L or I" evidence="5">
    <location>
        <position position="54"/>
    </location>
</feature>
<feature type="unsure residue" description="L or I" evidence="5">
    <location>
        <position position="68"/>
    </location>
</feature>
<feature type="unsure residue" description="L or I" evidence="5">
    <location>
        <position position="75"/>
    </location>
</feature>
<feature type="unsure residue" description="L or I" evidence="5">
    <location>
        <position position="78"/>
    </location>
</feature>
<feature type="unsure residue" description="L or I" evidence="5">
    <location>
        <position position="81"/>
    </location>
</feature>
<feature type="unsure residue" description="L or I" evidence="5">
    <location>
        <position position="88"/>
    </location>
</feature>
<feature type="unsure residue" description="L or I" evidence="5">
    <location>
        <position position="91"/>
    </location>
</feature>
<feature type="unsure residue" description="L or I" evidence="5">
    <location>
        <position position="96"/>
    </location>
</feature>
<feature type="unsure residue" description="L or I" evidence="5">
    <location>
        <position position="105"/>
    </location>
</feature>
<feature type="unsure residue" description="L or I" evidence="5">
    <location>
        <position position="106"/>
    </location>
</feature>
<feature type="unsure residue" description="L or I" evidence="5">
    <location>
        <position position="110"/>
    </location>
</feature>
<feature type="unsure residue" description="L or I" evidence="5">
    <location>
        <position position="112"/>
    </location>
</feature>
<feature type="unsure residue" description="L or I" evidence="5">
    <location>
        <position position="114"/>
    </location>
</feature>
<feature type="unsure residue" description="L or I" evidence="5">
    <location>
        <position position="117"/>
    </location>
</feature>
<feature type="unsure residue" description="L or I" evidence="5">
    <location>
        <position position="118"/>
    </location>
</feature>
<feature type="unsure residue" description="L or I" evidence="5">
    <location>
        <position position="141"/>
    </location>
</feature>
<organism>
    <name type="scientific">Peromyscus californicus</name>
    <name type="common">California mouse</name>
    <dbReference type="NCBI Taxonomy" id="42520"/>
    <lineage>
        <taxon>Eukaryota</taxon>
        <taxon>Metazoa</taxon>
        <taxon>Chordata</taxon>
        <taxon>Craniata</taxon>
        <taxon>Vertebrata</taxon>
        <taxon>Euteleostomi</taxon>
        <taxon>Mammalia</taxon>
        <taxon>Eutheria</taxon>
        <taxon>Euarchontoglires</taxon>
        <taxon>Glires</taxon>
        <taxon>Rodentia</taxon>
        <taxon>Myomorpha</taxon>
        <taxon>Muroidea</taxon>
        <taxon>Cricetidae</taxon>
        <taxon>Neotominae</taxon>
        <taxon>Peromyscus</taxon>
    </lineage>
</organism>
<sequence length="146" mass="15761">VHLTDAEKALVTGLWGKVKPDELGGEALGRLLVGYPWTQRFFDSFGDLSSASALMGNPKVKAHGKKVLDSFSEGLKHLDNLKGTFASLSELHCDKLHVDPENFKLLGNMLVLVLAHLLGKDFTPAAQAAYQKVVAGVATALAHKYH</sequence>
<accession>B3EWD6</accession>
<name>HBB_PERCA</name>
<keyword id="KW-0007">Acetylation</keyword>
<keyword id="KW-0903">Direct protein sequencing</keyword>
<keyword id="KW-0349">Heme</keyword>
<keyword id="KW-0408">Iron</keyword>
<keyword id="KW-0479">Metal-binding</keyword>
<keyword id="KW-0561">Oxygen transport</keyword>
<keyword id="KW-0597">Phosphoprotein</keyword>
<keyword id="KW-0702">S-nitrosylation</keyword>
<keyword id="KW-0813">Transport</keyword>
<protein>
    <recommendedName>
        <fullName evidence="6">Hemoglobin subunit beta</fullName>
    </recommendedName>
</protein>
<dbReference type="SMR" id="B3EWD6"/>
<dbReference type="GO" id="GO:0072562">
    <property type="term" value="C:blood microparticle"/>
    <property type="evidence" value="ECO:0007669"/>
    <property type="project" value="TreeGrafter"/>
</dbReference>
<dbReference type="GO" id="GO:0031838">
    <property type="term" value="C:haptoglobin-hemoglobin complex"/>
    <property type="evidence" value="ECO:0007669"/>
    <property type="project" value="TreeGrafter"/>
</dbReference>
<dbReference type="GO" id="GO:0005833">
    <property type="term" value="C:hemoglobin complex"/>
    <property type="evidence" value="ECO:0007669"/>
    <property type="project" value="InterPro"/>
</dbReference>
<dbReference type="GO" id="GO:0031720">
    <property type="term" value="F:haptoglobin binding"/>
    <property type="evidence" value="ECO:0007669"/>
    <property type="project" value="TreeGrafter"/>
</dbReference>
<dbReference type="GO" id="GO:0020037">
    <property type="term" value="F:heme binding"/>
    <property type="evidence" value="ECO:0007669"/>
    <property type="project" value="InterPro"/>
</dbReference>
<dbReference type="GO" id="GO:0031721">
    <property type="term" value="F:hemoglobin alpha binding"/>
    <property type="evidence" value="ECO:0007669"/>
    <property type="project" value="TreeGrafter"/>
</dbReference>
<dbReference type="GO" id="GO:0046872">
    <property type="term" value="F:metal ion binding"/>
    <property type="evidence" value="ECO:0007669"/>
    <property type="project" value="UniProtKB-KW"/>
</dbReference>
<dbReference type="GO" id="GO:0043177">
    <property type="term" value="F:organic acid binding"/>
    <property type="evidence" value="ECO:0007669"/>
    <property type="project" value="TreeGrafter"/>
</dbReference>
<dbReference type="GO" id="GO:0019825">
    <property type="term" value="F:oxygen binding"/>
    <property type="evidence" value="ECO:0007669"/>
    <property type="project" value="InterPro"/>
</dbReference>
<dbReference type="GO" id="GO:0005344">
    <property type="term" value="F:oxygen carrier activity"/>
    <property type="evidence" value="ECO:0007669"/>
    <property type="project" value="UniProtKB-KW"/>
</dbReference>
<dbReference type="GO" id="GO:0004601">
    <property type="term" value="F:peroxidase activity"/>
    <property type="evidence" value="ECO:0007669"/>
    <property type="project" value="TreeGrafter"/>
</dbReference>
<dbReference type="GO" id="GO:0042744">
    <property type="term" value="P:hydrogen peroxide catabolic process"/>
    <property type="evidence" value="ECO:0007669"/>
    <property type="project" value="TreeGrafter"/>
</dbReference>
<dbReference type="CDD" id="cd08925">
    <property type="entry name" value="Hb-beta-like"/>
    <property type="match status" value="1"/>
</dbReference>
<dbReference type="FunFam" id="1.10.490.10:FF:000001">
    <property type="entry name" value="Hemoglobin subunit beta"/>
    <property type="match status" value="1"/>
</dbReference>
<dbReference type="Gene3D" id="1.10.490.10">
    <property type="entry name" value="Globins"/>
    <property type="match status" value="1"/>
</dbReference>
<dbReference type="InterPro" id="IPR000971">
    <property type="entry name" value="Globin"/>
</dbReference>
<dbReference type="InterPro" id="IPR009050">
    <property type="entry name" value="Globin-like_sf"/>
</dbReference>
<dbReference type="InterPro" id="IPR012292">
    <property type="entry name" value="Globin/Proto"/>
</dbReference>
<dbReference type="InterPro" id="IPR002337">
    <property type="entry name" value="Hemoglobin_b"/>
</dbReference>
<dbReference type="InterPro" id="IPR050056">
    <property type="entry name" value="Hemoglobin_oxygen_transport"/>
</dbReference>
<dbReference type="PANTHER" id="PTHR11442">
    <property type="entry name" value="HEMOGLOBIN FAMILY MEMBER"/>
    <property type="match status" value="1"/>
</dbReference>
<dbReference type="PANTHER" id="PTHR11442:SF42">
    <property type="entry name" value="HEMOGLOBIN SUBUNIT BETA"/>
    <property type="match status" value="1"/>
</dbReference>
<dbReference type="Pfam" id="PF00042">
    <property type="entry name" value="Globin"/>
    <property type="match status" value="1"/>
</dbReference>
<dbReference type="PRINTS" id="PR00814">
    <property type="entry name" value="BETAHAEM"/>
</dbReference>
<dbReference type="SUPFAM" id="SSF46458">
    <property type="entry name" value="Globin-like"/>
    <property type="match status" value="1"/>
</dbReference>
<dbReference type="PROSITE" id="PS01033">
    <property type="entry name" value="GLOBIN"/>
    <property type="match status" value="1"/>
</dbReference>
<evidence type="ECO:0000250" key="1">
    <source>
        <dbReference type="UniProtKB" id="P02070"/>
    </source>
</evidence>
<evidence type="ECO:0000250" key="2">
    <source>
        <dbReference type="UniProtKB" id="P02086"/>
    </source>
</evidence>
<evidence type="ECO:0000250" key="3">
    <source>
        <dbReference type="UniProtKB" id="P68871"/>
    </source>
</evidence>
<evidence type="ECO:0000255" key="4">
    <source>
        <dbReference type="PROSITE-ProRule" id="PRU00238"/>
    </source>
</evidence>
<evidence type="ECO:0000269" key="5">
    <source>
    </source>
</evidence>
<evidence type="ECO:0000303" key="6">
    <source>
    </source>
</evidence>
<evidence type="ECO:0000305" key="7"/>
<proteinExistence type="evidence at protein level"/>
<comment type="function">
    <text evidence="7">Involved in oxygen transport from the lung to the various peripheral tissues.</text>
</comment>
<comment type="subunit">
    <text evidence="7">Heterotetramer of two alpha chains and two beta chains.</text>
</comment>
<comment type="tissue specificity">
    <text evidence="7">Red blood cells.</text>
</comment>
<comment type="similarity">
    <text evidence="4">Belongs to the globin family.</text>
</comment>
<reference evidence="7" key="1">
    <citation type="journal article" date="2012" name="Biol. Chem.">
        <title>Development of a host blood meal database: de novo sequencing of hemoglobin from nine small mammals using mass spectrometry.</title>
        <authorList>
            <person name="Laskay U.A."/>
            <person name="Burg J."/>
            <person name="Kaleta E.J."/>
            <person name="Vilcins I.M."/>
            <person name="Telford Iii S.R."/>
            <person name="Barbour A.G."/>
            <person name="Wysocki V.H."/>
        </authorList>
    </citation>
    <scope>PROTEIN SEQUENCE</scope>
    <source>
        <tissue evidence="5">Erythrocyte</tissue>
    </source>
</reference>